<name>GPMI_YERPP</name>
<feature type="chain" id="PRO_1000064022" description="2,3-bisphosphoglycerate-independent phosphoglycerate mutase">
    <location>
        <begin position="1"/>
        <end position="515"/>
    </location>
</feature>
<feature type="active site" description="Phosphoserine intermediate" evidence="1">
    <location>
        <position position="64"/>
    </location>
</feature>
<feature type="binding site" evidence="1">
    <location>
        <position position="14"/>
    </location>
    <ligand>
        <name>Mn(2+)</name>
        <dbReference type="ChEBI" id="CHEBI:29035"/>
        <label>2</label>
    </ligand>
</feature>
<feature type="binding site" evidence="1">
    <location>
        <position position="64"/>
    </location>
    <ligand>
        <name>Mn(2+)</name>
        <dbReference type="ChEBI" id="CHEBI:29035"/>
        <label>2</label>
    </ligand>
</feature>
<feature type="binding site" evidence="1">
    <location>
        <position position="125"/>
    </location>
    <ligand>
        <name>substrate</name>
    </ligand>
</feature>
<feature type="binding site" evidence="1">
    <location>
        <begin position="155"/>
        <end position="156"/>
    </location>
    <ligand>
        <name>substrate</name>
    </ligand>
</feature>
<feature type="binding site" evidence="1">
    <location>
        <position position="187"/>
    </location>
    <ligand>
        <name>substrate</name>
    </ligand>
</feature>
<feature type="binding site" evidence="1">
    <location>
        <position position="193"/>
    </location>
    <ligand>
        <name>substrate</name>
    </ligand>
</feature>
<feature type="binding site" evidence="1">
    <location>
        <begin position="263"/>
        <end position="266"/>
    </location>
    <ligand>
        <name>substrate</name>
    </ligand>
</feature>
<feature type="binding site" evidence="1">
    <location>
        <position position="337"/>
    </location>
    <ligand>
        <name>substrate</name>
    </ligand>
</feature>
<feature type="binding site" evidence="1">
    <location>
        <position position="404"/>
    </location>
    <ligand>
        <name>Mn(2+)</name>
        <dbReference type="ChEBI" id="CHEBI:29035"/>
        <label>1</label>
    </ligand>
</feature>
<feature type="binding site" evidence="1">
    <location>
        <position position="408"/>
    </location>
    <ligand>
        <name>Mn(2+)</name>
        <dbReference type="ChEBI" id="CHEBI:29035"/>
        <label>1</label>
    </ligand>
</feature>
<feature type="binding site" evidence="1">
    <location>
        <position position="445"/>
    </location>
    <ligand>
        <name>Mn(2+)</name>
        <dbReference type="ChEBI" id="CHEBI:29035"/>
        <label>2</label>
    </ligand>
</feature>
<feature type="binding site" evidence="1">
    <location>
        <position position="446"/>
    </location>
    <ligand>
        <name>Mn(2+)</name>
        <dbReference type="ChEBI" id="CHEBI:29035"/>
        <label>2</label>
    </ligand>
</feature>
<feature type="binding site" evidence="1">
    <location>
        <position position="464"/>
    </location>
    <ligand>
        <name>Mn(2+)</name>
        <dbReference type="ChEBI" id="CHEBI:29035"/>
        <label>1</label>
    </ligand>
</feature>
<keyword id="KW-0324">Glycolysis</keyword>
<keyword id="KW-0413">Isomerase</keyword>
<keyword id="KW-0464">Manganese</keyword>
<keyword id="KW-0479">Metal-binding</keyword>
<evidence type="ECO:0000255" key="1">
    <source>
        <dbReference type="HAMAP-Rule" id="MF_01038"/>
    </source>
</evidence>
<gene>
    <name evidence="1" type="primary">gpmI</name>
    <name type="ordered locus">YPDSF_3841</name>
</gene>
<accession>A4TSC2</accession>
<protein>
    <recommendedName>
        <fullName evidence="1">2,3-bisphosphoglycerate-independent phosphoglycerate mutase</fullName>
        <shortName evidence="1">BPG-independent PGAM</shortName>
        <shortName evidence="1">Phosphoglyceromutase</shortName>
        <shortName evidence="1">iPGM</shortName>
        <ecNumber evidence="1">5.4.2.12</ecNumber>
    </recommendedName>
</protein>
<reference key="1">
    <citation type="submission" date="2007-02" db="EMBL/GenBank/DDBJ databases">
        <title>Complete sequence of chromosome of Yersinia pestis Pestoides F.</title>
        <authorList>
            <consortium name="US DOE Joint Genome Institute"/>
            <person name="Copeland A."/>
            <person name="Lucas S."/>
            <person name="Lapidus A."/>
            <person name="Barry K."/>
            <person name="Detter J.C."/>
            <person name="Glavina del Rio T."/>
            <person name="Hammon N."/>
            <person name="Israni S."/>
            <person name="Dalin E."/>
            <person name="Tice H."/>
            <person name="Pitluck S."/>
            <person name="Di Bartolo G."/>
            <person name="Chain P."/>
            <person name="Malfatti S."/>
            <person name="Shin M."/>
            <person name="Vergez L."/>
            <person name="Schmutz J."/>
            <person name="Larimer F."/>
            <person name="Land M."/>
            <person name="Hauser L."/>
            <person name="Worsham P."/>
            <person name="Chu M."/>
            <person name="Bearden S."/>
            <person name="Garcia E."/>
            <person name="Richardson P."/>
        </authorList>
    </citation>
    <scope>NUCLEOTIDE SEQUENCE [LARGE SCALE GENOMIC DNA]</scope>
    <source>
        <strain>Pestoides F</strain>
    </source>
</reference>
<proteinExistence type="inferred from homology"/>
<organism>
    <name type="scientific">Yersinia pestis (strain Pestoides F)</name>
    <dbReference type="NCBI Taxonomy" id="386656"/>
    <lineage>
        <taxon>Bacteria</taxon>
        <taxon>Pseudomonadati</taxon>
        <taxon>Pseudomonadota</taxon>
        <taxon>Gammaproteobacteria</taxon>
        <taxon>Enterobacterales</taxon>
        <taxon>Yersiniaceae</taxon>
        <taxon>Yersinia</taxon>
    </lineage>
</organism>
<dbReference type="EC" id="5.4.2.12" evidence="1"/>
<dbReference type="EMBL" id="CP000668">
    <property type="protein sequence ID" value="ABP42184.1"/>
    <property type="molecule type" value="Genomic_DNA"/>
</dbReference>
<dbReference type="SMR" id="A4TSC2"/>
<dbReference type="KEGG" id="ypp:YPDSF_3841"/>
<dbReference type="PATRIC" id="fig|386656.14.peg.677"/>
<dbReference type="UniPathway" id="UPA00109">
    <property type="reaction ID" value="UER00186"/>
</dbReference>
<dbReference type="GO" id="GO:0005829">
    <property type="term" value="C:cytosol"/>
    <property type="evidence" value="ECO:0007669"/>
    <property type="project" value="TreeGrafter"/>
</dbReference>
<dbReference type="GO" id="GO:0030145">
    <property type="term" value="F:manganese ion binding"/>
    <property type="evidence" value="ECO:0007669"/>
    <property type="project" value="UniProtKB-UniRule"/>
</dbReference>
<dbReference type="GO" id="GO:0004619">
    <property type="term" value="F:phosphoglycerate mutase activity"/>
    <property type="evidence" value="ECO:0007669"/>
    <property type="project" value="UniProtKB-EC"/>
</dbReference>
<dbReference type="GO" id="GO:0006007">
    <property type="term" value="P:glucose catabolic process"/>
    <property type="evidence" value="ECO:0007669"/>
    <property type="project" value="InterPro"/>
</dbReference>
<dbReference type="GO" id="GO:0006096">
    <property type="term" value="P:glycolytic process"/>
    <property type="evidence" value="ECO:0007669"/>
    <property type="project" value="UniProtKB-UniRule"/>
</dbReference>
<dbReference type="CDD" id="cd16010">
    <property type="entry name" value="iPGM"/>
    <property type="match status" value="1"/>
</dbReference>
<dbReference type="FunFam" id="3.40.1450.10:FF:000001">
    <property type="entry name" value="2,3-bisphosphoglycerate-independent phosphoglycerate mutase"/>
    <property type="match status" value="1"/>
</dbReference>
<dbReference type="FunFam" id="3.40.720.10:FF:000001">
    <property type="entry name" value="2,3-bisphosphoglycerate-independent phosphoglycerate mutase"/>
    <property type="match status" value="1"/>
</dbReference>
<dbReference type="Gene3D" id="3.40.720.10">
    <property type="entry name" value="Alkaline Phosphatase, subunit A"/>
    <property type="match status" value="1"/>
</dbReference>
<dbReference type="Gene3D" id="3.40.1450.10">
    <property type="entry name" value="BPG-independent phosphoglycerate mutase, domain B"/>
    <property type="match status" value="1"/>
</dbReference>
<dbReference type="HAMAP" id="MF_01038">
    <property type="entry name" value="GpmI"/>
    <property type="match status" value="1"/>
</dbReference>
<dbReference type="InterPro" id="IPR017850">
    <property type="entry name" value="Alkaline_phosphatase_core_sf"/>
</dbReference>
<dbReference type="InterPro" id="IPR011258">
    <property type="entry name" value="BPG-indep_PGM_N"/>
</dbReference>
<dbReference type="InterPro" id="IPR006124">
    <property type="entry name" value="Metalloenzyme"/>
</dbReference>
<dbReference type="InterPro" id="IPR036646">
    <property type="entry name" value="PGAM_B_sf"/>
</dbReference>
<dbReference type="InterPro" id="IPR005995">
    <property type="entry name" value="Pgm_bpd_ind"/>
</dbReference>
<dbReference type="NCBIfam" id="TIGR01307">
    <property type="entry name" value="pgm_bpd_ind"/>
    <property type="match status" value="1"/>
</dbReference>
<dbReference type="NCBIfam" id="NF003897">
    <property type="entry name" value="PRK05434.1-5"/>
    <property type="match status" value="1"/>
</dbReference>
<dbReference type="PANTHER" id="PTHR31637">
    <property type="entry name" value="2,3-BISPHOSPHOGLYCERATE-INDEPENDENT PHOSPHOGLYCERATE MUTASE"/>
    <property type="match status" value="1"/>
</dbReference>
<dbReference type="PANTHER" id="PTHR31637:SF0">
    <property type="entry name" value="2,3-BISPHOSPHOGLYCERATE-INDEPENDENT PHOSPHOGLYCERATE MUTASE"/>
    <property type="match status" value="1"/>
</dbReference>
<dbReference type="Pfam" id="PF06415">
    <property type="entry name" value="iPGM_N"/>
    <property type="match status" value="1"/>
</dbReference>
<dbReference type="Pfam" id="PF01676">
    <property type="entry name" value="Metalloenzyme"/>
    <property type="match status" value="1"/>
</dbReference>
<dbReference type="PIRSF" id="PIRSF001492">
    <property type="entry name" value="IPGAM"/>
    <property type="match status" value="1"/>
</dbReference>
<dbReference type="SUPFAM" id="SSF64158">
    <property type="entry name" value="2,3-Bisphosphoglycerate-independent phosphoglycerate mutase, substrate-binding domain"/>
    <property type="match status" value="1"/>
</dbReference>
<dbReference type="SUPFAM" id="SSF53649">
    <property type="entry name" value="Alkaline phosphatase-like"/>
    <property type="match status" value="1"/>
</dbReference>
<comment type="function">
    <text evidence="1">Catalyzes the interconversion of 2-phosphoglycerate and 3-phosphoglycerate.</text>
</comment>
<comment type="catalytic activity">
    <reaction evidence="1">
        <text>(2R)-2-phosphoglycerate = (2R)-3-phosphoglycerate</text>
        <dbReference type="Rhea" id="RHEA:15901"/>
        <dbReference type="ChEBI" id="CHEBI:58272"/>
        <dbReference type="ChEBI" id="CHEBI:58289"/>
        <dbReference type="EC" id="5.4.2.12"/>
    </reaction>
</comment>
<comment type="cofactor">
    <cofactor evidence="1">
        <name>Mn(2+)</name>
        <dbReference type="ChEBI" id="CHEBI:29035"/>
    </cofactor>
    <text evidence="1">Binds 2 manganese ions per subunit.</text>
</comment>
<comment type="pathway">
    <text evidence="1">Carbohydrate degradation; glycolysis; pyruvate from D-glyceraldehyde 3-phosphate: step 3/5.</text>
</comment>
<comment type="subunit">
    <text evidence="1">Monomer.</text>
</comment>
<comment type="similarity">
    <text evidence="1">Belongs to the BPG-independent phosphoglycerate mutase family.</text>
</comment>
<sequence length="515" mass="56168">MSSTKKPLVLTILDGYGHREEQQDNAILNAKTPVMDVLWQQQPHTLIAASGLDVGLPDGQMGNSEVGHVNLGAGRIVYQDLTRLDKEIKEGDFFTNPTLTAAVDNAVKTGKAVHIMGLLSAGGVHSHEDHIMAMVELAAKRGATAIYLHAFLDGRDTPPRSAESSLKRFTAKFAELGNGRIASIIGRYYAMDRDNRWDRVQLAYDLLTQAKGEFTADNAVAGLQAAYARGENDEFVKPTVIQATGEADAAMNEGDTLIFMNFRADRARQITRTFVNAEFDGFKRDKVVNFGDFIMLTEYAADIKVACAYPPASLTNTFGEWLMKHDKTQLRISETEKYAHVTFFYNGGVEEPFKGEDRILINSPKVATYDLQPEMSSAELTEKLVSAIGSGKYDVIICNYPNGDMVGHTGDYDAAVKAVETLDNCIEQVVAAVKAADGQLLITADHGNAEQMRDPATGQAHTAHTSLPVPLIYVGNKAVKAVEGGKLSDIAPTMLSLMEMEIPQEMTGKPLFIVE</sequence>